<gene>
    <name evidence="3" type="ORF">GME11374</name>
</gene>
<sequence length="580" mass="63130">MVQLKAEIDAGPLDNSISIFSLIENGLRQKPDAPAVICLHESADALDHLIVPSNPRERERGPADGECLMLSYRQLHHTAVKLAVGFRAKGVAPGSTLLMLVPNGGHYALLLWACILARLTFISVDPAEVLDDLKSQRIASILQETRPEVVVIPSVIEAKAMDGILGATSITELLKISLKKVQEPGWERMTKLVSDGIANPLDMDALVEEARCDDPDRLYSIMFTSGTSERPKGCPLRVGGAAHMVRSWSWLINQINSSYALQQAHNSRGIAPAQTVQTWAEGGAVVMTGRGFDVDDMLDAIRLNYASFVVLTPAMAHALAAHLETHQIDMSSVKTVQVGGDAVTKNVLVKCNSLFPHADVCINHGMTEGGACFEWSFLDIAPSDVPFFGQICPVGKTARGAAVRIWDTEREEIAERGRPGQLHLSSESIIRHYLHGESAGSFYQQGGQRWFITGDIAMMTDEGTVYILGRSKDTIVSDGHLVMPFVIESCLEDLTGSQASVIAIPHPVYGQVPYAVLQTLKQVDDHAIQDQVVRLLGTDYQLAGINSLEALGMTTVPVNDTRKIIKSQIKEAVMRYIDGK</sequence>
<feature type="chain" id="PRO_0000456750" description="Acyl--CoA ligase GME11374">
    <location>
        <begin position="1"/>
        <end position="580"/>
    </location>
</feature>
<evidence type="ECO:0000269" key="1">
    <source>
    </source>
</evidence>
<evidence type="ECO:0000269" key="2">
    <source>
    </source>
</evidence>
<evidence type="ECO:0000303" key="3">
    <source>
    </source>
</evidence>
<evidence type="ECO:0000305" key="4"/>
<evidence type="ECO:0000305" key="5">
    <source>
    </source>
</evidence>
<accession>A0A5B8YU69</accession>
<name>GME74_PESMI</name>
<proteinExistence type="evidence at transcript level"/>
<organism>
    <name type="scientific">Pestalotiopsis microspora</name>
    <dbReference type="NCBI Taxonomy" id="85828"/>
    <lineage>
        <taxon>Eukaryota</taxon>
        <taxon>Fungi</taxon>
        <taxon>Dikarya</taxon>
        <taxon>Ascomycota</taxon>
        <taxon>Pezizomycotina</taxon>
        <taxon>Sordariomycetes</taxon>
        <taxon>Xylariomycetidae</taxon>
        <taxon>Amphisphaeriales</taxon>
        <taxon>Sporocadaceae</taxon>
        <taxon>Pestalotiopsis</taxon>
    </lineage>
</organism>
<keyword id="KW-0067">ATP-binding</keyword>
<keyword id="KW-0436">Ligase</keyword>
<keyword id="KW-0547">Nucleotide-binding</keyword>
<comment type="function">
    <text evidence="1 5">Acyl--CoA ligase; part of the gene cluster that mediates the biosynthesis of dibenzodioxocinones such as pestalotiollide B, a novel class of inhibitors against cholesterol ester transfer protein (CEPT) (PubMed:31474098). The biosynthesis initiates from condensation of acetate and malonate units catalyzed by the non-reducing PKS pks8/GME11356. Pks8/GME11356 lacks a thioesterase (TE) domain, which is important to the cyclizing of the third ring of atrochrysone carboxylic acid, and the esterase GME11355 might play the role of TE and catalyzes the cyclization reaction of the C ring. The lactamase-like protein GME11357 (or other beta-lactamases in Pestalotiopsis microspora) probably hydrolyzes the thioester bond between the ACP of pks8/GME11356 and the intermediate to release atrochrysone carboxylic acid, which is spontaneously dehydrates to form endocrocin anthrone. Endocrocin anthrone is further converted to emodin via the endocrocin intermediate. Emodin is then oxidized by several enzymes such as the Baeyer-Villiger oxidase GME11358, the oxidoreductase GME11367, the short chain dehydrogenase/reductase GME11373, as well as by other oxidoreductases from the cluster, to modify the A and C rings and open the B ring, and finally yield monodictyphenone. The prenyltransferase GME11375 may catalyze the addition reaction between the C5 side chains and the carbon bone of dibenzodioxocinones. The remaining biochemical reactions to the final product dibenzodioxocinones should be methylation catalyzed by methyltransferase GME11366 and reduction and lactonization reaction catalyzed by a series of oxidordeuctases (Probable).</text>
</comment>
<comment type="pathway">
    <text evidence="5">Secondary metabolite biosynthesis.</text>
</comment>
<comment type="induction">
    <text evidence="2">The expression of the dibenzodioxocinones biosynthesis cluster is positively regulated by the transcription factor dibT.</text>
</comment>
<comment type="similarity">
    <text evidence="4">Belongs to the ATP-dependent AMP-binding enzyme family.</text>
</comment>
<reference key="1">
    <citation type="journal article" date="2019" name="J. Microbiol. Biotechnol.">
        <title>A gene cluster for the biosynthesis of dibenzodioxocinons in the endophyte Pestalotiopsis microspora, a taxol producer.</title>
        <authorList>
            <person name="Liu Y."/>
            <person name="Chen L."/>
            <person name="Xie Q."/>
            <person name="Yu X."/>
            <person name="Duan A."/>
            <person name="Lin Y."/>
            <person name="Xiang B."/>
            <person name="Hao X."/>
            <person name="Chen W."/>
            <person name="Zhu X."/>
        </authorList>
    </citation>
    <scope>NUCLEOTIDE SEQUENCE [MRNA]</scope>
    <scope>FUNCTION</scope>
    <scope>PATHWAY</scope>
    <source>
        <strain>NK17</strain>
    </source>
</reference>
<reference key="2">
    <citation type="journal article" date="2022" name="Microbiol. Res.">
        <title>Acquiring novel chemicals by overexpression of a transcription factor DibT in the dibenzodioxocinone biosynthetic cluster in Pestalotiopsis microspora.</title>
        <authorList>
            <person name="Liu Y."/>
            <person name="Fu Y."/>
            <person name="Zhou M."/>
            <person name="Hao X."/>
            <person name="Zhang P."/>
            <person name="Zhu X."/>
        </authorList>
    </citation>
    <scope>INDUCTION</scope>
</reference>
<protein>
    <recommendedName>
        <fullName evidence="3">Acyl--CoA ligase GME11374</fullName>
        <ecNumber evidence="5">6.2.1.-</ecNumber>
    </recommendedName>
    <alternativeName>
        <fullName evidence="3">Dibenzodioxocinones biosynthesis cluster protein GME11374</fullName>
    </alternativeName>
</protein>
<dbReference type="EC" id="6.2.1.-" evidence="5"/>
<dbReference type="EMBL" id="MK590993">
    <property type="protein sequence ID" value="QED41505.1"/>
    <property type="molecule type" value="mRNA"/>
</dbReference>
<dbReference type="SMR" id="A0A5B8YU69"/>
<dbReference type="GO" id="GO:0005524">
    <property type="term" value="F:ATP binding"/>
    <property type="evidence" value="ECO:0007669"/>
    <property type="project" value="UniProtKB-KW"/>
</dbReference>
<dbReference type="GO" id="GO:0031956">
    <property type="term" value="F:medium-chain fatty acid-CoA ligase activity"/>
    <property type="evidence" value="ECO:0007669"/>
    <property type="project" value="TreeGrafter"/>
</dbReference>
<dbReference type="GO" id="GO:0006631">
    <property type="term" value="P:fatty acid metabolic process"/>
    <property type="evidence" value="ECO:0007669"/>
    <property type="project" value="TreeGrafter"/>
</dbReference>
<dbReference type="Gene3D" id="3.30.300.30">
    <property type="match status" value="1"/>
</dbReference>
<dbReference type="Gene3D" id="3.40.50.12780">
    <property type="entry name" value="N-terminal domain of ligase-like"/>
    <property type="match status" value="1"/>
</dbReference>
<dbReference type="InterPro" id="IPR045851">
    <property type="entry name" value="AMP-bd_C_sf"/>
</dbReference>
<dbReference type="InterPro" id="IPR000873">
    <property type="entry name" value="AMP-dep_synth/lig_dom"/>
</dbReference>
<dbReference type="InterPro" id="IPR042099">
    <property type="entry name" value="ANL_N_sf"/>
</dbReference>
<dbReference type="PANTHER" id="PTHR43201">
    <property type="entry name" value="ACYL-COA SYNTHETASE"/>
    <property type="match status" value="1"/>
</dbReference>
<dbReference type="PANTHER" id="PTHR43201:SF5">
    <property type="entry name" value="MEDIUM-CHAIN ACYL-COA LIGASE ACSF2, MITOCHONDRIAL"/>
    <property type="match status" value="1"/>
</dbReference>
<dbReference type="Pfam" id="PF00501">
    <property type="entry name" value="AMP-binding"/>
    <property type="match status" value="1"/>
</dbReference>
<dbReference type="SUPFAM" id="SSF56801">
    <property type="entry name" value="Acetyl-CoA synthetase-like"/>
    <property type="match status" value="1"/>
</dbReference>